<gene>
    <name evidence="1" type="primary">arnE</name>
    <name type="ordered locus">SG1840</name>
</gene>
<accession>Q2NRW0</accession>
<protein>
    <recommendedName>
        <fullName evidence="1">Probable 4-amino-4-deoxy-L-arabinose-phosphoundecaprenol flippase subunit ArnE</fullName>
        <shortName evidence="1">L-Ara4N-phosphoundecaprenol flippase subunit ArnE</shortName>
    </recommendedName>
    <alternativeName>
        <fullName evidence="1">Undecaprenyl phosphate-aminoarabinose flippase subunit ArnE</fullName>
    </alternativeName>
</protein>
<sequence>MMYLLIFLVSLLSCAGQLCQKHAAGASSGAGELRHRVRWLAISLLLLGGAMLVWLWVLQRVPVGIAYPMFSLNFVLVTLAARWLWREPVSLRHGCGLLLIVAGVMCMGVNL</sequence>
<name>ARNE_SODGM</name>
<comment type="function">
    <text evidence="1">Translocates 4-amino-4-deoxy-L-arabinose-phosphoundecaprenol (alpha-L-Ara4N-phosphoundecaprenol) from the cytoplasmic to the periplasmic side of the inner membrane.</text>
</comment>
<comment type="pathway">
    <text evidence="1">Bacterial outer membrane biogenesis; lipopolysaccharide biosynthesis.</text>
</comment>
<comment type="subunit">
    <text evidence="1">Heterodimer of ArnE and ArnF.</text>
</comment>
<comment type="subcellular location">
    <subcellularLocation>
        <location evidence="1">Cell inner membrane</location>
        <topology evidence="1">Multi-pass membrane protein</topology>
    </subcellularLocation>
</comment>
<comment type="similarity">
    <text evidence="1">Belongs to the ArnE family.</text>
</comment>
<evidence type="ECO:0000255" key="1">
    <source>
        <dbReference type="HAMAP-Rule" id="MF_01869"/>
    </source>
</evidence>
<feature type="chain" id="PRO_0000383010" description="Probable 4-amino-4-deoxy-L-arabinose-phosphoundecaprenol flippase subunit ArnE">
    <location>
        <begin position="1"/>
        <end position="111"/>
    </location>
</feature>
<feature type="transmembrane region" description="Helical" evidence="1">
    <location>
        <begin position="39"/>
        <end position="59"/>
    </location>
</feature>
<feature type="transmembrane region" description="Helical" evidence="1">
    <location>
        <begin position="61"/>
        <end position="81"/>
    </location>
</feature>
<feature type="transmembrane region" description="Helical" evidence="1">
    <location>
        <begin position="89"/>
        <end position="109"/>
    </location>
</feature>
<feature type="domain" description="EamA" evidence="1">
    <location>
        <begin position="40"/>
        <end position="109"/>
    </location>
</feature>
<keyword id="KW-0997">Cell inner membrane</keyword>
<keyword id="KW-1003">Cell membrane</keyword>
<keyword id="KW-0441">Lipid A biosynthesis</keyword>
<keyword id="KW-0444">Lipid biosynthesis</keyword>
<keyword id="KW-0443">Lipid metabolism</keyword>
<keyword id="KW-0448">Lipopolysaccharide biosynthesis</keyword>
<keyword id="KW-0472">Membrane</keyword>
<keyword id="KW-0812">Transmembrane</keyword>
<keyword id="KW-1133">Transmembrane helix</keyword>
<keyword id="KW-0813">Transport</keyword>
<reference key="1">
    <citation type="journal article" date="2006" name="Genome Res.">
        <title>Massive genome erosion and functional adaptations provide insights into the symbiotic lifestyle of Sodalis glossinidius in the tsetse host.</title>
        <authorList>
            <person name="Toh H."/>
            <person name="Weiss B.L."/>
            <person name="Perkin S.A.H."/>
            <person name="Yamashita A."/>
            <person name="Oshima K."/>
            <person name="Hattori M."/>
            <person name="Aksoy S."/>
        </authorList>
    </citation>
    <scope>NUCLEOTIDE SEQUENCE [LARGE SCALE GENOMIC DNA]</scope>
    <source>
        <strain>morsitans</strain>
    </source>
</reference>
<organism>
    <name type="scientific">Sodalis glossinidius (strain morsitans)</name>
    <dbReference type="NCBI Taxonomy" id="343509"/>
    <lineage>
        <taxon>Bacteria</taxon>
        <taxon>Pseudomonadati</taxon>
        <taxon>Pseudomonadota</taxon>
        <taxon>Gammaproteobacteria</taxon>
        <taxon>Enterobacterales</taxon>
        <taxon>Bruguierivoracaceae</taxon>
        <taxon>Sodalis</taxon>
    </lineage>
</organism>
<dbReference type="EMBL" id="AP008232">
    <property type="protein sequence ID" value="BAE75115.1"/>
    <property type="molecule type" value="Genomic_DNA"/>
</dbReference>
<dbReference type="RefSeq" id="WP_011411787.1">
    <property type="nucleotide sequence ID" value="NC_007712.1"/>
</dbReference>
<dbReference type="SMR" id="Q2NRW0"/>
<dbReference type="STRING" id="343509.SG1840"/>
<dbReference type="KEGG" id="sgl:SG1840"/>
<dbReference type="eggNOG" id="COG2076">
    <property type="taxonomic scope" value="Bacteria"/>
</dbReference>
<dbReference type="HOGENOM" id="CLU_131462_5_1_6"/>
<dbReference type="OrthoDB" id="6058674at2"/>
<dbReference type="BioCyc" id="SGLO343509:SGP1_RS16670-MONOMER"/>
<dbReference type="UniPathway" id="UPA00030"/>
<dbReference type="Proteomes" id="UP000001932">
    <property type="component" value="Chromosome"/>
</dbReference>
<dbReference type="GO" id="GO:0005886">
    <property type="term" value="C:plasma membrane"/>
    <property type="evidence" value="ECO:0007669"/>
    <property type="project" value="UniProtKB-SubCell"/>
</dbReference>
<dbReference type="GO" id="GO:1901505">
    <property type="term" value="F:carbohydrate derivative transmembrane transporter activity"/>
    <property type="evidence" value="ECO:0007669"/>
    <property type="project" value="InterPro"/>
</dbReference>
<dbReference type="GO" id="GO:0009245">
    <property type="term" value="P:lipid A biosynthetic process"/>
    <property type="evidence" value="ECO:0007669"/>
    <property type="project" value="UniProtKB-UniRule"/>
</dbReference>
<dbReference type="GO" id="GO:0009103">
    <property type="term" value="P:lipopolysaccharide biosynthetic process"/>
    <property type="evidence" value="ECO:0007669"/>
    <property type="project" value="UniProtKB-UniRule"/>
</dbReference>
<dbReference type="FunFam" id="1.10.3730.20:FF:000002">
    <property type="entry name" value="Probable 4-amino-4-deoxy-L-arabinose-phosphoundecaprenol flippase subunit ArnE"/>
    <property type="match status" value="1"/>
</dbReference>
<dbReference type="Gene3D" id="1.10.3730.20">
    <property type="match status" value="1"/>
</dbReference>
<dbReference type="HAMAP" id="MF_01869">
    <property type="entry name" value="Flippase_ArnE"/>
    <property type="match status" value="1"/>
</dbReference>
<dbReference type="InterPro" id="IPR000620">
    <property type="entry name" value="EamA_dom"/>
</dbReference>
<dbReference type="InterPro" id="IPR022883">
    <property type="entry name" value="Flippase_ArnE"/>
</dbReference>
<dbReference type="InterPro" id="IPR000390">
    <property type="entry name" value="Small_drug/metabolite_transptr"/>
</dbReference>
<dbReference type="NCBIfam" id="NF011625">
    <property type="entry name" value="PRK15051.1"/>
    <property type="match status" value="1"/>
</dbReference>
<dbReference type="PANTHER" id="PTHR30561:SF23">
    <property type="entry name" value="4-AMINO-4-DEOXY-L-ARABINOSE-PHOSPHOUNDECAPRENOL FLIPPASE SUBUNIT ARNE-RELATED"/>
    <property type="match status" value="1"/>
</dbReference>
<dbReference type="PANTHER" id="PTHR30561">
    <property type="entry name" value="SMR FAMILY PROTON-DEPENDENT DRUG EFFLUX TRANSPORTER SUGE"/>
    <property type="match status" value="1"/>
</dbReference>
<dbReference type="Pfam" id="PF00892">
    <property type="entry name" value="EamA"/>
    <property type="match status" value="1"/>
</dbReference>
<dbReference type="SUPFAM" id="SSF103481">
    <property type="entry name" value="Multidrug resistance efflux transporter EmrE"/>
    <property type="match status" value="1"/>
</dbReference>
<proteinExistence type="inferred from homology"/>